<gene>
    <name type="primary">pstS</name>
    <name type="ordered locus">PM0436</name>
</gene>
<reference key="1">
    <citation type="journal article" date="2001" name="Proc. Natl. Acad. Sci. U.S.A.">
        <title>Complete genomic sequence of Pasteurella multocida Pm70.</title>
        <authorList>
            <person name="May B.J."/>
            <person name="Zhang Q."/>
            <person name="Li L.L."/>
            <person name="Paustian M.L."/>
            <person name="Whittam T.S."/>
            <person name="Kapur V."/>
        </authorList>
    </citation>
    <scope>NUCLEOTIDE SEQUENCE [LARGE SCALE GENOMIC DNA]</scope>
    <source>
        <strain>Pm70</strain>
    </source>
</reference>
<name>PSTS_PASMU</name>
<proteinExistence type="inferred from homology"/>
<sequence>MTKRAMLLAILFSTFALTTQAQTITGAGASFPYPIYAKWASMYEKQTGNKVNYQSIGSGGGQQQIIAKTIDFGASDDPMKAELLAQHQLLQFPAIIGGTVPVVNLPEITAGQLKLSGEVLADIFLGKIKKWNDPAIAKLNQGANLPDKAIIVVHRSDGSGTTFGWTNYLSKVSTEWKETVGQGKSVKWPTGQGGKGNEGVAAYVSKIKYSIGYVEYAYAKQNQLAWASLQNKAGQFVQPSAESFMAAAANAQWESAVGMGVILTNEEGDTSWPVTAASFILLHKHAEKPEITKAVFDFFDWAFKQGKVAATELDYVPLPEEVIQKIQAQWKTEVKSSDGKTLWQ</sequence>
<comment type="function">
    <text evidence="1">Part of the ABC transporter complex PstSACB involved in phosphate import.</text>
</comment>
<comment type="subunit">
    <text evidence="4">The complex is composed of two ATP-binding proteins (PstB), two transmembrane proteins (PstC and PstA) and a solute-binding protein (PstS).</text>
</comment>
<comment type="subcellular location">
    <subcellularLocation>
        <location evidence="1">Periplasm</location>
    </subcellularLocation>
</comment>
<comment type="similarity">
    <text evidence="4">Belongs to the PstS family.</text>
</comment>
<comment type="sequence caution" evidence="4">
    <conflict type="erroneous initiation">
        <sequence resource="EMBL-CDS" id="AAK02520"/>
    </conflict>
    <text>Extended N-terminus.</text>
</comment>
<evidence type="ECO:0000250" key="1"/>
<evidence type="ECO:0000250" key="2">
    <source>
        <dbReference type="UniProtKB" id="P9WGT7"/>
    </source>
</evidence>
<evidence type="ECO:0000255" key="3"/>
<evidence type="ECO:0000305" key="4"/>
<keyword id="KW-0574">Periplasm</keyword>
<keyword id="KW-0592">Phosphate transport</keyword>
<keyword id="KW-1185">Reference proteome</keyword>
<keyword id="KW-0732">Signal</keyword>
<keyword id="KW-0813">Transport</keyword>
<protein>
    <recommendedName>
        <fullName>Phosphate-binding protein PstS</fullName>
        <shortName>PBP</shortName>
    </recommendedName>
</protein>
<accession>Q9CNJ4</accession>
<dbReference type="EMBL" id="AE004439">
    <property type="protein sequence ID" value="AAK02520.1"/>
    <property type="status" value="ALT_INIT"/>
    <property type="molecule type" value="Genomic_DNA"/>
</dbReference>
<dbReference type="RefSeq" id="WP_005756281.1">
    <property type="nucleotide sequence ID" value="NC_002663.1"/>
</dbReference>
<dbReference type="SMR" id="Q9CNJ4"/>
<dbReference type="STRING" id="272843.PM0436"/>
<dbReference type="EnsemblBacteria" id="AAK02520">
    <property type="protein sequence ID" value="AAK02520"/>
    <property type="gene ID" value="PM0436"/>
</dbReference>
<dbReference type="GeneID" id="77206080"/>
<dbReference type="KEGG" id="pmu:PM0436"/>
<dbReference type="PATRIC" id="fig|272843.6.peg.448"/>
<dbReference type="HOGENOM" id="CLU_034528_1_0_6"/>
<dbReference type="OrthoDB" id="9801510at2"/>
<dbReference type="Proteomes" id="UP000000809">
    <property type="component" value="Chromosome"/>
</dbReference>
<dbReference type="GO" id="GO:0043190">
    <property type="term" value="C:ATP-binding cassette (ABC) transporter complex"/>
    <property type="evidence" value="ECO:0007669"/>
    <property type="project" value="InterPro"/>
</dbReference>
<dbReference type="GO" id="GO:0042597">
    <property type="term" value="C:periplasmic space"/>
    <property type="evidence" value="ECO:0007669"/>
    <property type="project" value="UniProtKB-SubCell"/>
</dbReference>
<dbReference type="GO" id="GO:0042301">
    <property type="term" value="F:phosphate ion binding"/>
    <property type="evidence" value="ECO:0007669"/>
    <property type="project" value="InterPro"/>
</dbReference>
<dbReference type="GO" id="GO:0035435">
    <property type="term" value="P:phosphate ion transmembrane transport"/>
    <property type="evidence" value="ECO:0007669"/>
    <property type="project" value="InterPro"/>
</dbReference>
<dbReference type="CDD" id="cd13565">
    <property type="entry name" value="PBP2_PstS"/>
    <property type="match status" value="1"/>
</dbReference>
<dbReference type="Gene3D" id="3.40.190.10">
    <property type="entry name" value="Periplasmic binding protein-like II"/>
    <property type="match status" value="2"/>
</dbReference>
<dbReference type="InterPro" id="IPR005673">
    <property type="entry name" value="ABC_phos-bd_PstS"/>
</dbReference>
<dbReference type="InterPro" id="IPR024370">
    <property type="entry name" value="PBP_domain"/>
</dbReference>
<dbReference type="InterPro" id="IPR050962">
    <property type="entry name" value="Phosphate-bind_PstS"/>
</dbReference>
<dbReference type="NCBIfam" id="TIGR00975">
    <property type="entry name" value="3a0107s03"/>
    <property type="match status" value="1"/>
</dbReference>
<dbReference type="NCBIfam" id="NF008171">
    <property type="entry name" value="PRK10918.1"/>
    <property type="match status" value="1"/>
</dbReference>
<dbReference type="PANTHER" id="PTHR42996">
    <property type="entry name" value="PHOSPHATE-BINDING PROTEIN PSTS"/>
    <property type="match status" value="1"/>
</dbReference>
<dbReference type="PANTHER" id="PTHR42996:SF1">
    <property type="entry name" value="PHOSPHATE-BINDING PROTEIN PSTS"/>
    <property type="match status" value="1"/>
</dbReference>
<dbReference type="Pfam" id="PF12849">
    <property type="entry name" value="PBP_like_2"/>
    <property type="match status" value="1"/>
</dbReference>
<dbReference type="PIRSF" id="PIRSF002756">
    <property type="entry name" value="PstS"/>
    <property type="match status" value="1"/>
</dbReference>
<dbReference type="SUPFAM" id="SSF53850">
    <property type="entry name" value="Periplasmic binding protein-like II"/>
    <property type="match status" value="1"/>
</dbReference>
<organism>
    <name type="scientific">Pasteurella multocida (strain Pm70)</name>
    <dbReference type="NCBI Taxonomy" id="272843"/>
    <lineage>
        <taxon>Bacteria</taxon>
        <taxon>Pseudomonadati</taxon>
        <taxon>Pseudomonadota</taxon>
        <taxon>Gammaproteobacteria</taxon>
        <taxon>Pasteurellales</taxon>
        <taxon>Pasteurellaceae</taxon>
        <taxon>Pasteurella</taxon>
    </lineage>
</organism>
<feature type="signal peptide" evidence="3">
    <location>
        <begin position="1"/>
        <end position="18"/>
    </location>
</feature>
<feature type="chain" id="PRO_0000031850" description="Phosphate-binding protein PstS">
    <location>
        <begin position="19"/>
        <end position="344"/>
    </location>
</feature>
<feature type="binding site" evidence="2">
    <location>
        <begin position="29"/>
        <end position="31"/>
    </location>
    <ligand>
        <name>phosphate</name>
        <dbReference type="ChEBI" id="CHEBI:43474"/>
    </ligand>
</feature>
<feature type="binding site" evidence="2">
    <location>
        <position position="58"/>
    </location>
    <ligand>
        <name>phosphate</name>
        <dbReference type="ChEBI" id="CHEBI:43474"/>
    </ligand>
</feature>
<feature type="binding site" evidence="2">
    <location>
        <position position="76"/>
    </location>
    <ligand>
        <name>phosphate</name>
        <dbReference type="ChEBI" id="CHEBI:43474"/>
    </ligand>
</feature>
<feature type="binding site" evidence="2">
    <location>
        <begin position="159"/>
        <end position="161"/>
    </location>
    <ligand>
        <name>phosphate</name>
        <dbReference type="ChEBI" id="CHEBI:43474"/>
    </ligand>
</feature>